<evidence type="ECO:0000255" key="1">
    <source>
        <dbReference type="HAMAP-Rule" id="MF_01010"/>
    </source>
</evidence>
<feature type="chain" id="PRO_1000200850" description="23S rRNA (uracil(1939)-C(5))-methyltransferase RlmD">
    <location>
        <begin position="1"/>
        <end position="450"/>
    </location>
</feature>
<feature type="domain" description="TRAM" evidence="1">
    <location>
        <begin position="12"/>
        <end position="70"/>
    </location>
</feature>
<feature type="active site" description="Nucleophile" evidence="1">
    <location>
        <position position="406"/>
    </location>
</feature>
<feature type="binding site" evidence="1">
    <location>
        <position position="83"/>
    </location>
    <ligand>
        <name>[4Fe-4S] cluster</name>
        <dbReference type="ChEBI" id="CHEBI:49883"/>
    </ligand>
</feature>
<feature type="binding site" evidence="1">
    <location>
        <position position="89"/>
    </location>
    <ligand>
        <name>[4Fe-4S] cluster</name>
        <dbReference type="ChEBI" id="CHEBI:49883"/>
    </ligand>
</feature>
<feature type="binding site" evidence="1">
    <location>
        <position position="92"/>
    </location>
    <ligand>
        <name>[4Fe-4S] cluster</name>
        <dbReference type="ChEBI" id="CHEBI:49883"/>
    </ligand>
</feature>
<feature type="binding site" evidence="1">
    <location>
        <position position="171"/>
    </location>
    <ligand>
        <name>[4Fe-4S] cluster</name>
        <dbReference type="ChEBI" id="CHEBI:49883"/>
    </ligand>
</feature>
<feature type="binding site" evidence="1">
    <location>
        <position position="283"/>
    </location>
    <ligand>
        <name>S-adenosyl-L-methionine</name>
        <dbReference type="ChEBI" id="CHEBI:59789"/>
    </ligand>
</feature>
<feature type="binding site" evidence="1">
    <location>
        <position position="312"/>
    </location>
    <ligand>
        <name>S-adenosyl-L-methionine</name>
        <dbReference type="ChEBI" id="CHEBI:59789"/>
    </ligand>
</feature>
<feature type="binding site" evidence="1">
    <location>
        <position position="317"/>
    </location>
    <ligand>
        <name>S-adenosyl-L-methionine</name>
        <dbReference type="ChEBI" id="CHEBI:59789"/>
    </ligand>
</feature>
<feature type="binding site" evidence="1">
    <location>
        <position position="333"/>
    </location>
    <ligand>
        <name>S-adenosyl-L-methionine</name>
        <dbReference type="ChEBI" id="CHEBI:59789"/>
    </ligand>
</feature>
<feature type="binding site" evidence="1">
    <location>
        <position position="360"/>
    </location>
    <ligand>
        <name>S-adenosyl-L-methionine</name>
        <dbReference type="ChEBI" id="CHEBI:59789"/>
    </ligand>
</feature>
<feature type="binding site" evidence="1">
    <location>
        <position position="380"/>
    </location>
    <ligand>
        <name>S-adenosyl-L-methionine</name>
        <dbReference type="ChEBI" id="CHEBI:59789"/>
    </ligand>
</feature>
<keyword id="KW-0004">4Fe-4S</keyword>
<keyword id="KW-0408">Iron</keyword>
<keyword id="KW-0411">Iron-sulfur</keyword>
<keyword id="KW-0479">Metal-binding</keyword>
<keyword id="KW-0489">Methyltransferase</keyword>
<keyword id="KW-0698">rRNA processing</keyword>
<keyword id="KW-0949">S-adenosyl-L-methionine</keyword>
<keyword id="KW-0808">Transferase</keyword>
<gene>
    <name evidence="1" type="primary">rlmD</name>
    <name type="synonym">rumA</name>
    <name type="ordered locus">Sbal195_3290</name>
</gene>
<accession>A9KYI1</accession>
<organism>
    <name type="scientific">Shewanella baltica (strain OS195)</name>
    <dbReference type="NCBI Taxonomy" id="399599"/>
    <lineage>
        <taxon>Bacteria</taxon>
        <taxon>Pseudomonadati</taxon>
        <taxon>Pseudomonadota</taxon>
        <taxon>Gammaproteobacteria</taxon>
        <taxon>Alteromonadales</taxon>
        <taxon>Shewanellaceae</taxon>
        <taxon>Shewanella</taxon>
    </lineage>
</organism>
<dbReference type="EC" id="2.1.1.190" evidence="1"/>
<dbReference type="EMBL" id="CP000891">
    <property type="protein sequence ID" value="ABX50452.1"/>
    <property type="molecule type" value="Genomic_DNA"/>
</dbReference>
<dbReference type="RefSeq" id="WP_012197455.1">
    <property type="nucleotide sequence ID" value="NC_009997.1"/>
</dbReference>
<dbReference type="SMR" id="A9KYI1"/>
<dbReference type="GeneID" id="11773342"/>
<dbReference type="KEGG" id="sbn:Sbal195_3290"/>
<dbReference type="HOGENOM" id="CLU_014689_8_2_6"/>
<dbReference type="Proteomes" id="UP000000770">
    <property type="component" value="Chromosome"/>
</dbReference>
<dbReference type="GO" id="GO:0051539">
    <property type="term" value="F:4 iron, 4 sulfur cluster binding"/>
    <property type="evidence" value="ECO:0007669"/>
    <property type="project" value="UniProtKB-KW"/>
</dbReference>
<dbReference type="GO" id="GO:0005506">
    <property type="term" value="F:iron ion binding"/>
    <property type="evidence" value="ECO:0007669"/>
    <property type="project" value="UniProtKB-UniRule"/>
</dbReference>
<dbReference type="GO" id="GO:0003723">
    <property type="term" value="F:RNA binding"/>
    <property type="evidence" value="ECO:0007669"/>
    <property type="project" value="InterPro"/>
</dbReference>
<dbReference type="GO" id="GO:0070041">
    <property type="term" value="F:rRNA (uridine-C5-)-methyltransferase activity"/>
    <property type="evidence" value="ECO:0007669"/>
    <property type="project" value="UniProtKB-UniRule"/>
</dbReference>
<dbReference type="GO" id="GO:0070475">
    <property type="term" value="P:rRNA base methylation"/>
    <property type="evidence" value="ECO:0007669"/>
    <property type="project" value="TreeGrafter"/>
</dbReference>
<dbReference type="CDD" id="cd02440">
    <property type="entry name" value="AdoMet_MTases"/>
    <property type="match status" value="1"/>
</dbReference>
<dbReference type="FunFam" id="3.40.50.150:FF:000009">
    <property type="entry name" value="23S rRNA (Uracil(1939)-C(5))-methyltransferase RlmD"/>
    <property type="match status" value="1"/>
</dbReference>
<dbReference type="FunFam" id="2.40.50.140:FF:000097">
    <property type="entry name" value="23S rRNA (uracil(1939)-C(5))-methyltransferase RlmD"/>
    <property type="match status" value="1"/>
</dbReference>
<dbReference type="Gene3D" id="2.40.50.1070">
    <property type="match status" value="1"/>
</dbReference>
<dbReference type="Gene3D" id="2.40.50.140">
    <property type="entry name" value="Nucleic acid-binding proteins"/>
    <property type="match status" value="1"/>
</dbReference>
<dbReference type="Gene3D" id="3.40.50.150">
    <property type="entry name" value="Vaccinia Virus protein VP39"/>
    <property type="match status" value="1"/>
</dbReference>
<dbReference type="HAMAP" id="MF_01010">
    <property type="entry name" value="23SrRNA_methyltr_RlmD"/>
    <property type="match status" value="1"/>
</dbReference>
<dbReference type="InterPro" id="IPR001566">
    <property type="entry name" value="23S_rRNA_MeTrfase_RlmD"/>
</dbReference>
<dbReference type="InterPro" id="IPR030390">
    <property type="entry name" value="MeTrfase_TrmA_AS"/>
</dbReference>
<dbReference type="InterPro" id="IPR030391">
    <property type="entry name" value="MeTrfase_TrmA_CS"/>
</dbReference>
<dbReference type="InterPro" id="IPR012340">
    <property type="entry name" value="NA-bd_OB-fold"/>
</dbReference>
<dbReference type="InterPro" id="IPR029063">
    <property type="entry name" value="SAM-dependent_MTases_sf"/>
</dbReference>
<dbReference type="InterPro" id="IPR002792">
    <property type="entry name" value="TRAM_dom"/>
</dbReference>
<dbReference type="InterPro" id="IPR010280">
    <property type="entry name" value="U5_MeTrfase_fam"/>
</dbReference>
<dbReference type="NCBIfam" id="NF009639">
    <property type="entry name" value="PRK13168.1"/>
    <property type="match status" value="1"/>
</dbReference>
<dbReference type="NCBIfam" id="TIGR00479">
    <property type="entry name" value="rumA"/>
    <property type="match status" value="1"/>
</dbReference>
<dbReference type="PANTHER" id="PTHR11061:SF49">
    <property type="entry name" value="23S RRNA (URACIL(1939)-C(5))-METHYLTRANSFERASE RLMD"/>
    <property type="match status" value="1"/>
</dbReference>
<dbReference type="PANTHER" id="PTHR11061">
    <property type="entry name" value="RNA M5U METHYLTRANSFERASE"/>
    <property type="match status" value="1"/>
</dbReference>
<dbReference type="Pfam" id="PF01938">
    <property type="entry name" value="TRAM"/>
    <property type="match status" value="1"/>
</dbReference>
<dbReference type="Pfam" id="PF05958">
    <property type="entry name" value="tRNA_U5-meth_tr"/>
    <property type="match status" value="1"/>
</dbReference>
<dbReference type="SUPFAM" id="SSF50249">
    <property type="entry name" value="Nucleic acid-binding proteins"/>
    <property type="match status" value="1"/>
</dbReference>
<dbReference type="SUPFAM" id="SSF53335">
    <property type="entry name" value="S-adenosyl-L-methionine-dependent methyltransferases"/>
    <property type="match status" value="1"/>
</dbReference>
<dbReference type="PROSITE" id="PS51687">
    <property type="entry name" value="SAM_MT_RNA_M5U"/>
    <property type="match status" value="1"/>
</dbReference>
<dbReference type="PROSITE" id="PS50926">
    <property type="entry name" value="TRAM"/>
    <property type="match status" value="1"/>
</dbReference>
<dbReference type="PROSITE" id="PS01230">
    <property type="entry name" value="TRMA_1"/>
    <property type="match status" value="1"/>
</dbReference>
<dbReference type="PROSITE" id="PS01231">
    <property type="entry name" value="TRMA_2"/>
    <property type="match status" value="1"/>
</dbReference>
<proteinExistence type="inferred from homology"/>
<reference key="1">
    <citation type="submission" date="2007-11" db="EMBL/GenBank/DDBJ databases">
        <title>Complete sequence of chromosome of Shewanella baltica OS195.</title>
        <authorList>
            <consortium name="US DOE Joint Genome Institute"/>
            <person name="Copeland A."/>
            <person name="Lucas S."/>
            <person name="Lapidus A."/>
            <person name="Barry K."/>
            <person name="Glavina del Rio T."/>
            <person name="Dalin E."/>
            <person name="Tice H."/>
            <person name="Pitluck S."/>
            <person name="Chain P."/>
            <person name="Malfatti S."/>
            <person name="Shin M."/>
            <person name="Vergez L."/>
            <person name="Schmutz J."/>
            <person name="Larimer F."/>
            <person name="Land M."/>
            <person name="Hauser L."/>
            <person name="Kyrpides N."/>
            <person name="Kim E."/>
            <person name="Brettar I."/>
            <person name="Rodrigues J."/>
            <person name="Konstantinidis K."/>
            <person name="Klappenbach J."/>
            <person name="Hofle M."/>
            <person name="Tiedje J."/>
            <person name="Richardson P."/>
        </authorList>
    </citation>
    <scope>NUCLEOTIDE SEQUENCE [LARGE SCALE GENOMIC DNA]</scope>
    <source>
        <strain>OS195</strain>
    </source>
</reference>
<comment type="function">
    <text evidence="1">Catalyzes the formation of 5-methyl-uridine at position 1939 (m5U1939) in 23S rRNA.</text>
</comment>
<comment type="catalytic activity">
    <reaction evidence="1">
        <text>uridine(1939) in 23S rRNA + S-adenosyl-L-methionine = 5-methyluridine(1939) in 23S rRNA + S-adenosyl-L-homocysteine + H(+)</text>
        <dbReference type="Rhea" id="RHEA:42908"/>
        <dbReference type="Rhea" id="RHEA-COMP:10278"/>
        <dbReference type="Rhea" id="RHEA-COMP:10279"/>
        <dbReference type="ChEBI" id="CHEBI:15378"/>
        <dbReference type="ChEBI" id="CHEBI:57856"/>
        <dbReference type="ChEBI" id="CHEBI:59789"/>
        <dbReference type="ChEBI" id="CHEBI:65315"/>
        <dbReference type="ChEBI" id="CHEBI:74447"/>
        <dbReference type="EC" id="2.1.1.190"/>
    </reaction>
</comment>
<comment type="similarity">
    <text evidence="1">Belongs to the class I-like SAM-binding methyltransferase superfamily. RNA M5U methyltransferase family. RlmD subfamily.</text>
</comment>
<name>RLMD_SHEB9</name>
<protein>
    <recommendedName>
        <fullName evidence="1">23S rRNA (uracil(1939)-C(5))-methyltransferase RlmD</fullName>
        <ecNumber evidence="1">2.1.1.190</ecNumber>
    </recommendedName>
    <alternativeName>
        <fullName evidence="1">23S rRNA(m5U1939)-methyltransferase</fullName>
    </alternativeName>
</protein>
<sequence length="450" mass="49107">MAQFFKAKPNSSKQLSAKLSLSVNQLDHLGAGIAQHQGKVVFIPGALPDETVTVQLTEQKKNYARAKLIKVDTPSSERVEPECPHYHTCGGCDLQHMSLSGQREHKEAALLDIMAKFAGAEGGALSPALTGEGWHYRRRARLATLFDKNTKHLSLGFRAASSSNVVPISQCQVLAKPLSDLIVPFAKLLNQLSAKASLGHLELIAADNGHFAVLRITKALNDKDLAKLSAFAEQHQIHICLQDNEGQFQGVGAELVLPVYQLLDDKAESDAVSLSFTPGNFVQVNGQINKAMVAQAMDWLAPAPDERILDLFCGMGNFSLPLAKMGADVIGVEGVAEMVTQARVNAKANNLDKLTFYHGDLSADLSLEPWMGKIDKLLLDPARAGAFESLQWLKKMKPRKVVYVSCNPASLARDSAVLLERGYRLQQLGLIDMFPQTHHIEAMALFELTK</sequence>